<organism>
    <name type="scientific">Listeria monocytogenes serovar 1/2a (strain ATCC BAA-679 / EGD-e)</name>
    <dbReference type="NCBI Taxonomy" id="169963"/>
    <lineage>
        <taxon>Bacteria</taxon>
        <taxon>Bacillati</taxon>
        <taxon>Bacillota</taxon>
        <taxon>Bacilli</taxon>
        <taxon>Bacillales</taxon>
        <taxon>Listeriaceae</taxon>
        <taxon>Listeria</taxon>
    </lineage>
</organism>
<dbReference type="EC" id="1.1.1.85" evidence="1"/>
<dbReference type="EMBL" id="AL591981">
    <property type="protein sequence ID" value="CAD00066.1"/>
    <property type="molecule type" value="Genomic_DNA"/>
</dbReference>
<dbReference type="PIR" id="AD1323">
    <property type="entry name" value="AD1323"/>
</dbReference>
<dbReference type="RefSeq" id="NP_465512.1">
    <property type="nucleotide sequence ID" value="NC_003210.1"/>
</dbReference>
<dbReference type="RefSeq" id="WP_010989858.1">
    <property type="nucleotide sequence ID" value="NZ_CP149495.1"/>
</dbReference>
<dbReference type="SMR" id="Q8Y5R8"/>
<dbReference type="STRING" id="169963.gene:17594673"/>
<dbReference type="PaxDb" id="169963-lmo1988"/>
<dbReference type="EnsemblBacteria" id="CAD00066">
    <property type="protein sequence ID" value="CAD00066"/>
    <property type="gene ID" value="CAD00066"/>
</dbReference>
<dbReference type="GeneID" id="984909"/>
<dbReference type="KEGG" id="lmo:lmo1988"/>
<dbReference type="PATRIC" id="fig|169963.11.peg.2035"/>
<dbReference type="eggNOG" id="COG0473">
    <property type="taxonomic scope" value="Bacteria"/>
</dbReference>
<dbReference type="HOGENOM" id="CLU_031953_0_3_9"/>
<dbReference type="OrthoDB" id="9806254at2"/>
<dbReference type="PhylomeDB" id="Q8Y5R8"/>
<dbReference type="BioCyc" id="LMON169963:LMO1988-MONOMER"/>
<dbReference type="UniPathway" id="UPA00048">
    <property type="reaction ID" value="UER00072"/>
</dbReference>
<dbReference type="Proteomes" id="UP000000817">
    <property type="component" value="Chromosome"/>
</dbReference>
<dbReference type="GO" id="GO:0005829">
    <property type="term" value="C:cytosol"/>
    <property type="evidence" value="ECO:0000318"/>
    <property type="project" value="GO_Central"/>
</dbReference>
<dbReference type="GO" id="GO:0003862">
    <property type="term" value="F:3-isopropylmalate dehydrogenase activity"/>
    <property type="evidence" value="ECO:0000318"/>
    <property type="project" value="GO_Central"/>
</dbReference>
<dbReference type="GO" id="GO:0000287">
    <property type="term" value="F:magnesium ion binding"/>
    <property type="evidence" value="ECO:0007669"/>
    <property type="project" value="InterPro"/>
</dbReference>
<dbReference type="GO" id="GO:0051287">
    <property type="term" value="F:NAD binding"/>
    <property type="evidence" value="ECO:0007669"/>
    <property type="project" value="InterPro"/>
</dbReference>
<dbReference type="GO" id="GO:0009098">
    <property type="term" value="P:L-leucine biosynthetic process"/>
    <property type="evidence" value="ECO:0000318"/>
    <property type="project" value="GO_Central"/>
</dbReference>
<dbReference type="FunFam" id="3.40.718.10:FF:000006">
    <property type="entry name" value="3-isopropylmalate dehydrogenase"/>
    <property type="match status" value="1"/>
</dbReference>
<dbReference type="Gene3D" id="3.40.718.10">
    <property type="entry name" value="Isopropylmalate Dehydrogenase"/>
    <property type="match status" value="1"/>
</dbReference>
<dbReference type="HAMAP" id="MF_01033">
    <property type="entry name" value="LeuB_type1"/>
    <property type="match status" value="1"/>
</dbReference>
<dbReference type="InterPro" id="IPR019818">
    <property type="entry name" value="IsoCit/isopropylmalate_DH_CS"/>
</dbReference>
<dbReference type="InterPro" id="IPR024084">
    <property type="entry name" value="IsoPropMal-DH-like_dom"/>
</dbReference>
<dbReference type="InterPro" id="IPR004429">
    <property type="entry name" value="Isopropylmalate_DH"/>
</dbReference>
<dbReference type="NCBIfam" id="TIGR00169">
    <property type="entry name" value="leuB"/>
    <property type="match status" value="1"/>
</dbReference>
<dbReference type="PANTHER" id="PTHR42979">
    <property type="entry name" value="3-ISOPROPYLMALATE DEHYDROGENASE"/>
    <property type="match status" value="1"/>
</dbReference>
<dbReference type="PANTHER" id="PTHR42979:SF1">
    <property type="entry name" value="3-ISOPROPYLMALATE DEHYDROGENASE"/>
    <property type="match status" value="1"/>
</dbReference>
<dbReference type="Pfam" id="PF00180">
    <property type="entry name" value="Iso_dh"/>
    <property type="match status" value="1"/>
</dbReference>
<dbReference type="SMART" id="SM01329">
    <property type="entry name" value="Iso_dh"/>
    <property type="match status" value="1"/>
</dbReference>
<dbReference type="SUPFAM" id="SSF53659">
    <property type="entry name" value="Isocitrate/Isopropylmalate dehydrogenase-like"/>
    <property type="match status" value="1"/>
</dbReference>
<dbReference type="PROSITE" id="PS00470">
    <property type="entry name" value="IDH_IMDH"/>
    <property type="match status" value="1"/>
</dbReference>
<gene>
    <name evidence="1" type="primary">leuB</name>
    <name type="ordered locus">lmo1988</name>
</gene>
<comment type="function">
    <text evidence="1">Catalyzes the oxidation of 3-carboxy-2-hydroxy-4-methylpentanoate (3-isopropylmalate) to 3-carboxy-4-methyl-2-oxopentanoate. The product decarboxylates to 4-methyl-2 oxopentanoate.</text>
</comment>
<comment type="catalytic activity">
    <reaction evidence="1">
        <text>(2R,3S)-3-isopropylmalate + NAD(+) = 4-methyl-2-oxopentanoate + CO2 + NADH</text>
        <dbReference type="Rhea" id="RHEA:32271"/>
        <dbReference type="ChEBI" id="CHEBI:16526"/>
        <dbReference type="ChEBI" id="CHEBI:17865"/>
        <dbReference type="ChEBI" id="CHEBI:35121"/>
        <dbReference type="ChEBI" id="CHEBI:57540"/>
        <dbReference type="ChEBI" id="CHEBI:57945"/>
        <dbReference type="EC" id="1.1.1.85"/>
    </reaction>
</comment>
<comment type="cofactor">
    <cofactor evidence="1">
        <name>Mg(2+)</name>
        <dbReference type="ChEBI" id="CHEBI:18420"/>
    </cofactor>
    <cofactor evidence="1">
        <name>Mn(2+)</name>
        <dbReference type="ChEBI" id="CHEBI:29035"/>
    </cofactor>
    <text evidence="1">Binds 1 Mg(2+) or Mn(2+) ion per subunit.</text>
</comment>
<comment type="pathway">
    <text evidence="1">Amino-acid biosynthesis; L-leucine biosynthesis; L-leucine from 3-methyl-2-oxobutanoate: step 3/4.</text>
</comment>
<comment type="subunit">
    <text evidence="1">Homodimer.</text>
</comment>
<comment type="subcellular location">
    <subcellularLocation>
        <location evidence="1">Cytoplasm</location>
    </subcellularLocation>
</comment>
<comment type="similarity">
    <text evidence="1">Belongs to the isocitrate and isopropylmalate dehydrogenases family. LeuB type 1 subfamily.</text>
</comment>
<reference key="1">
    <citation type="journal article" date="2001" name="Science">
        <title>Comparative genomics of Listeria species.</title>
        <authorList>
            <person name="Glaser P."/>
            <person name="Frangeul L."/>
            <person name="Buchrieser C."/>
            <person name="Rusniok C."/>
            <person name="Amend A."/>
            <person name="Baquero F."/>
            <person name="Berche P."/>
            <person name="Bloecker H."/>
            <person name="Brandt P."/>
            <person name="Chakraborty T."/>
            <person name="Charbit A."/>
            <person name="Chetouani F."/>
            <person name="Couve E."/>
            <person name="de Daruvar A."/>
            <person name="Dehoux P."/>
            <person name="Domann E."/>
            <person name="Dominguez-Bernal G."/>
            <person name="Duchaud E."/>
            <person name="Durant L."/>
            <person name="Dussurget O."/>
            <person name="Entian K.-D."/>
            <person name="Fsihi H."/>
            <person name="Garcia-del Portillo F."/>
            <person name="Garrido P."/>
            <person name="Gautier L."/>
            <person name="Goebel W."/>
            <person name="Gomez-Lopez N."/>
            <person name="Hain T."/>
            <person name="Hauf J."/>
            <person name="Jackson D."/>
            <person name="Jones L.-M."/>
            <person name="Kaerst U."/>
            <person name="Kreft J."/>
            <person name="Kuhn M."/>
            <person name="Kunst F."/>
            <person name="Kurapkat G."/>
            <person name="Madueno E."/>
            <person name="Maitournam A."/>
            <person name="Mata Vicente J."/>
            <person name="Ng E."/>
            <person name="Nedjari H."/>
            <person name="Nordsiek G."/>
            <person name="Novella S."/>
            <person name="de Pablos B."/>
            <person name="Perez-Diaz J.-C."/>
            <person name="Purcell R."/>
            <person name="Remmel B."/>
            <person name="Rose M."/>
            <person name="Schlueter T."/>
            <person name="Simoes N."/>
            <person name="Tierrez A."/>
            <person name="Vazquez-Boland J.-A."/>
            <person name="Voss H."/>
            <person name="Wehland J."/>
            <person name="Cossart P."/>
        </authorList>
    </citation>
    <scope>NUCLEOTIDE SEQUENCE [LARGE SCALE GENOMIC DNA]</scope>
    <source>
        <strain>ATCC BAA-679 / EGD-e</strain>
    </source>
</reference>
<evidence type="ECO:0000255" key="1">
    <source>
        <dbReference type="HAMAP-Rule" id="MF_01033"/>
    </source>
</evidence>
<sequence length="350" mass="37696">MTYKITSLAGDGIGPEIMTSGLQVLEAVAKKYNHTFEIESHPFGGAGIDVAQDPIPSSTLKACQDADAILLGAIGGPKWDNAPKRPEDGLLALRKALGLFANIRPIQVPSSITHLSPLKKEIVENTDFVVVRELTGGLYFGEPKHWDESAAVDSLTYTRAEIERIIEKAFEIAATRNKKVTSVDKANVLASSKLWRKIAEEVASRHPDITLEHLYIDAAAMLMIQRPTTFDVIVTENLFGDILSDEASVITGSLGMLPSASHAENGPSLYEPIHGSAPDIANQNIANPMSMISSVSMMLRQSFSLFKEADAIDAAATRTMQAGFLTADLGGNTTTTDFTNEVLKQIEGGE</sequence>
<proteinExistence type="inferred from homology"/>
<name>LEU3_LISMO</name>
<accession>Q8Y5R8</accession>
<feature type="chain" id="PRO_0000083705" description="3-isopropylmalate dehydrogenase">
    <location>
        <begin position="1"/>
        <end position="350"/>
    </location>
</feature>
<feature type="binding site" evidence="1">
    <location>
        <begin position="76"/>
        <end position="87"/>
    </location>
    <ligand>
        <name>NAD(+)</name>
        <dbReference type="ChEBI" id="CHEBI:57540"/>
    </ligand>
</feature>
<feature type="binding site" evidence="1">
    <location>
        <position position="94"/>
    </location>
    <ligand>
        <name>substrate</name>
    </ligand>
</feature>
<feature type="binding site" evidence="1">
    <location>
        <position position="104"/>
    </location>
    <ligand>
        <name>substrate</name>
    </ligand>
</feature>
<feature type="binding site" evidence="1">
    <location>
        <position position="132"/>
    </location>
    <ligand>
        <name>substrate</name>
    </ligand>
</feature>
<feature type="binding site" evidence="1">
    <location>
        <position position="217"/>
    </location>
    <ligand>
        <name>Mg(2+)</name>
        <dbReference type="ChEBI" id="CHEBI:18420"/>
    </ligand>
</feature>
<feature type="binding site" evidence="1">
    <location>
        <position position="217"/>
    </location>
    <ligand>
        <name>substrate</name>
    </ligand>
</feature>
<feature type="binding site" evidence="1">
    <location>
        <position position="241"/>
    </location>
    <ligand>
        <name>Mg(2+)</name>
        <dbReference type="ChEBI" id="CHEBI:18420"/>
    </ligand>
</feature>
<feature type="binding site" evidence="1">
    <location>
        <position position="245"/>
    </location>
    <ligand>
        <name>Mg(2+)</name>
        <dbReference type="ChEBI" id="CHEBI:18420"/>
    </ligand>
</feature>
<feature type="binding site" evidence="1">
    <location>
        <begin position="275"/>
        <end position="287"/>
    </location>
    <ligand>
        <name>NAD(+)</name>
        <dbReference type="ChEBI" id="CHEBI:57540"/>
    </ligand>
</feature>
<feature type="site" description="Important for catalysis" evidence="1">
    <location>
        <position position="139"/>
    </location>
</feature>
<feature type="site" description="Important for catalysis" evidence="1">
    <location>
        <position position="185"/>
    </location>
</feature>
<protein>
    <recommendedName>
        <fullName evidence="1">3-isopropylmalate dehydrogenase</fullName>
        <ecNumber evidence="1">1.1.1.85</ecNumber>
    </recommendedName>
    <alternativeName>
        <fullName evidence="1">3-IPM-DH</fullName>
    </alternativeName>
    <alternativeName>
        <fullName evidence="1">Beta-IPM dehydrogenase</fullName>
        <shortName evidence="1">IMDH</shortName>
    </alternativeName>
</protein>
<keyword id="KW-0028">Amino-acid biosynthesis</keyword>
<keyword id="KW-0100">Branched-chain amino acid biosynthesis</keyword>
<keyword id="KW-0963">Cytoplasm</keyword>
<keyword id="KW-0432">Leucine biosynthesis</keyword>
<keyword id="KW-0460">Magnesium</keyword>
<keyword id="KW-0464">Manganese</keyword>
<keyword id="KW-0479">Metal-binding</keyword>
<keyword id="KW-0520">NAD</keyword>
<keyword id="KW-0560">Oxidoreductase</keyword>
<keyword id="KW-1185">Reference proteome</keyword>